<dbReference type="EC" id="6.3.4.16" evidence="1"/>
<dbReference type="EC" id="6.3.5.5" evidence="1"/>
<dbReference type="EMBL" id="CP000003">
    <property type="protein sequence ID" value="AAT86797.1"/>
    <property type="molecule type" value="Genomic_DNA"/>
</dbReference>
<dbReference type="RefSeq" id="WP_011184390.1">
    <property type="nucleotide sequence ID" value="NC_006086.1"/>
</dbReference>
<dbReference type="SMR" id="Q5XCR6"/>
<dbReference type="KEGG" id="spa:M6_Spy0662"/>
<dbReference type="HOGENOM" id="CLU_000513_1_2_9"/>
<dbReference type="UniPathway" id="UPA00068">
    <property type="reaction ID" value="UER00171"/>
</dbReference>
<dbReference type="UniPathway" id="UPA00070">
    <property type="reaction ID" value="UER00115"/>
</dbReference>
<dbReference type="Proteomes" id="UP000001167">
    <property type="component" value="Chromosome"/>
</dbReference>
<dbReference type="GO" id="GO:0005737">
    <property type="term" value="C:cytoplasm"/>
    <property type="evidence" value="ECO:0007669"/>
    <property type="project" value="TreeGrafter"/>
</dbReference>
<dbReference type="GO" id="GO:0005524">
    <property type="term" value="F:ATP binding"/>
    <property type="evidence" value="ECO:0007669"/>
    <property type="project" value="UniProtKB-UniRule"/>
</dbReference>
<dbReference type="GO" id="GO:0004087">
    <property type="term" value="F:carbamoyl-phosphate synthase (ammonia) activity"/>
    <property type="evidence" value="ECO:0007669"/>
    <property type="project" value="RHEA"/>
</dbReference>
<dbReference type="GO" id="GO:0004088">
    <property type="term" value="F:carbamoyl-phosphate synthase (glutamine-hydrolyzing) activity"/>
    <property type="evidence" value="ECO:0007669"/>
    <property type="project" value="UniProtKB-UniRule"/>
</dbReference>
<dbReference type="GO" id="GO:0046872">
    <property type="term" value="F:metal ion binding"/>
    <property type="evidence" value="ECO:0007669"/>
    <property type="project" value="UniProtKB-KW"/>
</dbReference>
<dbReference type="GO" id="GO:0044205">
    <property type="term" value="P:'de novo' UMP biosynthetic process"/>
    <property type="evidence" value="ECO:0007669"/>
    <property type="project" value="UniProtKB-UniRule"/>
</dbReference>
<dbReference type="GO" id="GO:0006541">
    <property type="term" value="P:glutamine metabolic process"/>
    <property type="evidence" value="ECO:0007669"/>
    <property type="project" value="TreeGrafter"/>
</dbReference>
<dbReference type="GO" id="GO:0006526">
    <property type="term" value="P:L-arginine biosynthetic process"/>
    <property type="evidence" value="ECO:0007669"/>
    <property type="project" value="UniProtKB-UniRule"/>
</dbReference>
<dbReference type="CDD" id="cd01424">
    <property type="entry name" value="MGS_CPS_II"/>
    <property type="match status" value="1"/>
</dbReference>
<dbReference type="FunFam" id="1.10.1030.10:FF:000002">
    <property type="entry name" value="Carbamoyl-phosphate synthase large chain"/>
    <property type="match status" value="1"/>
</dbReference>
<dbReference type="FunFam" id="3.30.1490.20:FF:000001">
    <property type="entry name" value="Carbamoyl-phosphate synthase large chain"/>
    <property type="match status" value="1"/>
</dbReference>
<dbReference type="FunFam" id="3.30.470.20:FF:000001">
    <property type="entry name" value="Carbamoyl-phosphate synthase large chain"/>
    <property type="match status" value="1"/>
</dbReference>
<dbReference type="FunFam" id="3.30.470.20:FF:000026">
    <property type="entry name" value="Carbamoyl-phosphate synthase large chain"/>
    <property type="match status" value="1"/>
</dbReference>
<dbReference type="FunFam" id="3.40.50.20:FF:000001">
    <property type="entry name" value="Carbamoyl-phosphate synthase large chain"/>
    <property type="match status" value="2"/>
</dbReference>
<dbReference type="Gene3D" id="3.40.50.20">
    <property type="match status" value="2"/>
</dbReference>
<dbReference type="Gene3D" id="3.30.1490.20">
    <property type="entry name" value="ATP-grasp fold, A domain"/>
    <property type="match status" value="1"/>
</dbReference>
<dbReference type="Gene3D" id="3.30.470.20">
    <property type="entry name" value="ATP-grasp fold, B domain"/>
    <property type="match status" value="2"/>
</dbReference>
<dbReference type="Gene3D" id="1.10.1030.10">
    <property type="entry name" value="Carbamoyl-phosphate synthetase, large subunit oligomerisation domain"/>
    <property type="match status" value="1"/>
</dbReference>
<dbReference type="Gene3D" id="3.40.50.1380">
    <property type="entry name" value="Methylglyoxal synthase-like domain"/>
    <property type="match status" value="1"/>
</dbReference>
<dbReference type="HAMAP" id="MF_01210_A">
    <property type="entry name" value="CPSase_L_chain_A"/>
    <property type="match status" value="1"/>
</dbReference>
<dbReference type="HAMAP" id="MF_01210_B">
    <property type="entry name" value="CPSase_L_chain_B"/>
    <property type="match status" value="1"/>
</dbReference>
<dbReference type="InterPro" id="IPR011761">
    <property type="entry name" value="ATP-grasp"/>
</dbReference>
<dbReference type="InterPro" id="IPR013815">
    <property type="entry name" value="ATP_grasp_subdomain_1"/>
</dbReference>
<dbReference type="InterPro" id="IPR006275">
    <property type="entry name" value="CarbamoylP_synth_lsu"/>
</dbReference>
<dbReference type="InterPro" id="IPR005480">
    <property type="entry name" value="CarbamoylP_synth_lsu_oligo"/>
</dbReference>
<dbReference type="InterPro" id="IPR036897">
    <property type="entry name" value="CarbamoylP_synth_lsu_oligo_sf"/>
</dbReference>
<dbReference type="InterPro" id="IPR005479">
    <property type="entry name" value="CbamoylP_synth_lsu-like_ATP-bd"/>
</dbReference>
<dbReference type="InterPro" id="IPR005483">
    <property type="entry name" value="CbamoylP_synth_lsu_CPSase_dom"/>
</dbReference>
<dbReference type="InterPro" id="IPR011607">
    <property type="entry name" value="MGS-like_dom"/>
</dbReference>
<dbReference type="InterPro" id="IPR036914">
    <property type="entry name" value="MGS-like_dom_sf"/>
</dbReference>
<dbReference type="InterPro" id="IPR033937">
    <property type="entry name" value="MGS_CPS_CarB"/>
</dbReference>
<dbReference type="InterPro" id="IPR016185">
    <property type="entry name" value="PreATP-grasp_dom_sf"/>
</dbReference>
<dbReference type="NCBIfam" id="TIGR01369">
    <property type="entry name" value="CPSaseII_lrg"/>
    <property type="match status" value="1"/>
</dbReference>
<dbReference type="NCBIfam" id="NF003671">
    <property type="entry name" value="PRK05294.1"/>
    <property type="match status" value="1"/>
</dbReference>
<dbReference type="NCBIfam" id="NF009455">
    <property type="entry name" value="PRK12815.1"/>
    <property type="match status" value="1"/>
</dbReference>
<dbReference type="PANTHER" id="PTHR11405:SF53">
    <property type="entry name" value="CARBAMOYL-PHOSPHATE SYNTHASE [AMMONIA], MITOCHONDRIAL"/>
    <property type="match status" value="1"/>
</dbReference>
<dbReference type="PANTHER" id="PTHR11405">
    <property type="entry name" value="CARBAMOYLTRANSFERASE FAMILY MEMBER"/>
    <property type="match status" value="1"/>
</dbReference>
<dbReference type="Pfam" id="PF02786">
    <property type="entry name" value="CPSase_L_D2"/>
    <property type="match status" value="2"/>
</dbReference>
<dbReference type="Pfam" id="PF02787">
    <property type="entry name" value="CPSase_L_D3"/>
    <property type="match status" value="1"/>
</dbReference>
<dbReference type="Pfam" id="PF02142">
    <property type="entry name" value="MGS"/>
    <property type="match status" value="1"/>
</dbReference>
<dbReference type="PRINTS" id="PR00098">
    <property type="entry name" value="CPSASE"/>
</dbReference>
<dbReference type="SMART" id="SM01096">
    <property type="entry name" value="CPSase_L_D3"/>
    <property type="match status" value="1"/>
</dbReference>
<dbReference type="SMART" id="SM01209">
    <property type="entry name" value="GARS_A"/>
    <property type="match status" value="1"/>
</dbReference>
<dbReference type="SMART" id="SM00851">
    <property type="entry name" value="MGS"/>
    <property type="match status" value="1"/>
</dbReference>
<dbReference type="SUPFAM" id="SSF48108">
    <property type="entry name" value="Carbamoyl phosphate synthetase, large subunit connection domain"/>
    <property type="match status" value="1"/>
</dbReference>
<dbReference type="SUPFAM" id="SSF56059">
    <property type="entry name" value="Glutathione synthetase ATP-binding domain-like"/>
    <property type="match status" value="2"/>
</dbReference>
<dbReference type="SUPFAM" id="SSF52335">
    <property type="entry name" value="Methylglyoxal synthase-like"/>
    <property type="match status" value="1"/>
</dbReference>
<dbReference type="SUPFAM" id="SSF52440">
    <property type="entry name" value="PreATP-grasp domain"/>
    <property type="match status" value="2"/>
</dbReference>
<dbReference type="PROSITE" id="PS50975">
    <property type="entry name" value="ATP_GRASP"/>
    <property type="match status" value="2"/>
</dbReference>
<dbReference type="PROSITE" id="PS00866">
    <property type="entry name" value="CPSASE_1"/>
    <property type="match status" value="2"/>
</dbReference>
<dbReference type="PROSITE" id="PS00867">
    <property type="entry name" value="CPSASE_2"/>
    <property type="match status" value="2"/>
</dbReference>
<dbReference type="PROSITE" id="PS51855">
    <property type="entry name" value="MGS"/>
    <property type="match status" value="1"/>
</dbReference>
<gene>
    <name evidence="1" type="primary">carB</name>
    <name type="ordered locus">M6_Spy0662</name>
</gene>
<proteinExistence type="inferred from homology"/>
<evidence type="ECO:0000255" key="1">
    <source>
        <dbReference type="HAMAP-Rule" id="MF_01210"/>
    </source>
</evidence>
<comment type="function">
    <text evidence="1">Large subunit of the glutamine-dependent carbamoyl phosphate synthetase (CPSase). CPSase catalyzes the formation of carbamoyl phosphate from the ammonia moiety of glutamine, carbonate, and phosphate donated by ATP, constituting the first step of 2 biosynthetic pathways, one leading to arginine and/or urea and the other to pyrimidine nucleotides. The large subunit (synthetase) binds the substrates ammonia (free or transferred from glutamine from the small subunit), hydrogencarbonate and ATP and carries out an ATP-coupled ligase reaction, activating hydrogencarbonate by forming carboxy phosphate which reacts with ammonia to form carbamoyl phosphate.</text>
</comment>
<comment type="catalytic activity">
    <reaction evidence="1">
        <text>hydrogencarbonate + L-glutamine + 2 ATP + H2O = carbamoyl phosphate + L-glutamate + 2 ADP + phosphate + 2 H(+)</text>
        <dbReference type="Rhea" id="RHEA:18633"/>
        <dbReference type="ChEBI" id="CHEBI:15377"/>
        <dbReference type="ChEBI" id="CHEBI:15378"/>
        <dbReference type="ChEBI" id="CHEBI:17544"/>
        <dbReference type="ChEBI" id="CHEBI:29985"/>
        <dbReference type="ChEBI" id="CHEBI:30616"/>
        <dbReference type="ChEBI" id="CHEBI:43474"/>
        <dbReference type="ChEBI" id="CHEBI:58228"/>
        <dbReference type="ChEBI" id="CHEBI:58359"/>
        <dbReference type="ChEBI" id="CHEBI:456216"/>
        <dbReference type="EC" id="6.3.5.5"/>
    </reaction>
</comment>
<comment type="catalytic activity">
    <molecule>Carbamoyl phosphate synthase large chain</molecule>
    <reaction evidence="1">
        <text>hydrogencarbonate + NH4(+) + 2 ATP = carbamoyl phosphate + 2 ADP + phosphate + 2 H(+)</text>
        <dbReference type="Rhea" id="RHEA:18029"/>
        <dbReference type="ChEBI" id="CHEBI:15378"/>
        <dbReference type="ChEBI" id="CHEBI:17544"/>
        <dbReference type="ChEBI" id="CHEBI:28938"/>
        <dbReference type="ChEBI" id="CHEBI:30616"/>
        <dbReference type="ChEBI" id="CHEBI:43474"/>
        <dbReference type="ChEBI" id="CHEBI:58228"/>
        <dbReference type="ChEBI" id="CHEBI:456216"/>
        <dbReference type="EC" id="6.3.4.16"/>
    </reaction>
</comment>
<comment type="cofactor">
    <cofactor evidence="1">
        <name>Mg(2+)</name>
        <dbReference type="ChEBI" id="CHEBI:18420"/>
    </cofactor>
    <cofactor evidence="1">
        <name>Mn(2+)</name>
        <dbReference type="ChEBI" id="CHEBI:29035"/>
    </cofactor>
    <text evidence="1">Binds 4 Mg(2+) or Mn(2+) ions per subunit.</text>
</comment>
<comment type="pathway">
    <text evidence="1">Amino-acid biosynthesis; L-arginine biosynthesis; carbamoyl phosphate from bicarbonate: step 1/1.</text>
</comment>
<comment type="pathway">
    <text evidence="1">Pyrimidine metabolism; UMP biosynthesis via de novo pathway; (S)-dihydroorotate from bicarbonate: step 1/3.</text>
</comment>
<comment type="subunit">
    <text evidence="1">Composed of two chains; the small (or glutamine) chain promotes the hydrolysis of glutamine to ammonia, which is used by the large (or ammonia) chain to synthesize carbamoyl phosphate. Tetramer of heterodimers (alpha,beta)4.</text>
</comment>
<comment type="domain">
    <text evidence="1">The large subunit is composed of 2 ATP-grasp domains that are involved in binding the 2 ATP molecules needed for carbamoyl phosphate synthesis. The N-terminal ATP-grasp domain (referred to as the carboxyphosphate synthetic component) catalyzes the ATP-dependent phosphorylation of hydrogencarbonate to carboxyphosphate and the subsequent nucleophilic attack by ammonia to form a carbamate intermediate. The C-terminal ATP-grasp domain (referred to as the carbamoyl phosphate synthetic component) then catalyzes the phosphorylation of carbamate with the second ATP to form the end product carbamoyl phosphate. The reactive and unstable enzyme intermediates are sequentially channeled from one active site to the next through the interior of the protein over a distance of at least 96 A.</text>
</comment>
<comment type="similarity">
    <text evidence="1">Belongs to the CarB family.</text>
</comment>
<organism>
    <name type="scientific">Streptococcus pyogenes serotype M6 (strain ATCC BAA-946 / MGAS10394)</name>
    <dbReference type="NCBI Taxonomy" id="286636"/>
    <lineage>
        <taxon>Bacteria</taxon>
        <taxon>Bacillati</taxon>
        <taxon>Bacillota</taxon>
        <taxon>Bacilli</taxon>
        <taxon>Lactobacillales</taxon>
        <taxon>Streptococcaceae</taxon>
        <taxon>Streptococcus</taxon>
    </lineage>
</organism>
<keyword id="KW-0028">Amino-acid biosynthesis</keyword>
<keyword id="KW-0055">Arginine biosynthesis</keyword>
<keyword id="KW-0067">ATP-binding</keyword>
<keyword id="KW-0436">Ligase</keyword>
<keyword id="KW-0460">Magnesium</keyword>
<keyword id="KW-0464">Manganese</keyword>
<keyword id="KW-0479">Metal-binding</keyword>
<keyword id="KW-0547">Nucleotide-binding</keyword>
<keyword id="KW-0665">Pyrimidine biosynthesis</keyword>
<keyword id="KW-0677">Repeat</keyword>
<feature type="chain" id="PRO_0000145055" description="Carbamoyl phosphate synthase large chain">
    <location>
        <begin position="1"/>
        <end position="1058"/>
    </location>
</feature>
<feature type="domain" description="ATP-grasp 1" evidence="1">
    <location>
        <begin position="133"/>
        <end position="327"/>
    </location>
</feature>
<feature type="domain" description="ATP-grasp 2" evidence="1">
    <location>
        <begin position="671"/>
        <end position="861"/>
    </location>
</feature>
<feature type="domain" description="MGS-like" evidence="1">
    <location>
        <begin position="930"/>
        <end position="1058"/>
    </location>
</feature>
<feature type="region of interest" description="Carboxyphosphate synthetic domain" evidence="1">
    <location>
        <begin position="1"/>
        <end position="401"/>
    </location>
</feature>
<feature type="region of interest" description="Oligomerization domain" evidence="1">
    <location>
        <begin position="402"/>
        <end position="546"/>
    </location>
</feature>
<feature type="region of interest" description="Carbamoyl phosphate synthetic domain" evidence="1">
    <location>
        <begin position="547"/>
        <end position="929"/>
    </location>
</feature>
<feature type="region of interest" description="Allosteric domain" evidence="1">
    <location>
        <begin position="930"/>
        <end position="1058"/>
    </location>
</feature>
<feature type="binding site" evidence="1">
    <location>
        <position position="129"/>
    </location>
    <ligand>
        <name>ATP</name>
        <dbReference type="ChEBI" id="CHEBI:30616"/>
        <label>1</label>
    </ligand>
</feature>
<feature type="binding site" evidence="1">
    <location>
        <position position="169"/>
    </location>
    <ligand>
        <name>ATP</name>
        <dbReference type="ChEBI" id="CHEBI:30616"/>
        <label>1</label>
    </ligand>
</feature>
<feature type="binding site" evidence="1">
    <location>
        <position position="175"/>
    </location>
    <ligand>
        <name>ATP</name>
        <dbReference type="ChEBI" id="CHEBI:30616"/>
        <label>1</label>
    </ligand>
</feature>
<feature type="binding site" evidence="1">
    <location>
        <position position="176"/>
    </location>
    <ligand>
        <name>ATP</name>
        <dbReference type="ChEBI" id="CHEBI:30616"/>
        <label>1</label>
    </ligand>
</feature>
<feature type="binding site" evidence="1">
    <location>
        <position position="208"/>
    </location>
    <ligand>
        <name>ATP</name>
        <dbReference type="ChEBI" id="CHEBI:30616"/>
        <label>1</label>
    </ligand>
</feature>
<feature type="binding site" evidence="1">
    <location>
        <position position="210"/>
    </location>
    <ligand>
        <name>ATP</name>
        <dbReference type="ChEBI" id="CHEBI:30616"/>
        <label>1</label>
    </ligand>
</feature>
<feature type="binding site" evidence="1">
    <location>
        <position position="215"/>
    </location>
    <ligand>
        <name>ATP</name>
        <dbReference type="ChEBI" id="CHEBI:30616"/>
        <label>1</label>
    </ligand>
</feature>
<feature type="binding site" evidence="1">
    <location>
        <position position="241"/>
    </location>
    <ligand>
        <name>ATP</name>
        <dbReference type="ChEBI" id="CHEBI:30616"/>
        <label>1</label>
    </ligand>
</feature>
<feature type="binding site" evidence="1">
    <location>
        <position position="242"/>
    </location>
    <ligand>
        <name>ATP</name>
        <dbReference type="ChEBI" id="CHEBI:30616"/>
        <label>1</label>
    </ligand>
</feature>
<feature type="binding site" evidence="1">
    <location>
        <position position="243"/>
    </location>
    <ligand>
        <name>ATP</name>
        <dbReference type="ChEBI" id="CHEBI:30616"/>
        <label>1</label>
    </ligand>
</feature>
<feature type="binding site" evidence="1">
    <location>
        <position position="284"/>
    </location>
    <ligand>
        <name>ATP</name>
        <dbReference type="ChEBI" id="CHEBI:30616"/>
        <label>1</label>
    </ligand>
</feature>
<feature type="binding site" evidence="1">
    <location>
        <position position="284"/>
    </location>
    <ligand>
        <name>Mg(2+)</name>
        <dbReference type="ChEBI" id="CHEBI:18420"/>
        <label>1</label>
    </ligand>
</feature>
<feature type="binding site" evidence="1">
    <location>
        <position position="284"/>
    </location>
    <ligand>
        <name>Mn(2+)</name>
        <dbReference type="ChEBI" id="CHEBI:29035"/>
        <label>1</label>
    </ligand>
</feature>
<feature type="binding site" evidence="1">
    <location>
        <position position="298"/>
    </location>
    <ligand>
        <name>ATP</name>
        <dbReference type="ChEBI" id="CHEBI:30616"/>
        <label>1</label>
    </ligand>
</feature>
<feature type="binding site" evidence="1">
    <location>
        <position position="298"/>
    </location>
    <ligand>
        <name>Mg(2+)</name>
        <dbReference type="ChEBI" id="CHEBI:18420"/>
        <label>1</label>
    </ligand>
</feature>
<feature type="binding site" evidence="1">
    <location>
        <position position="298"/>
    </location>
    <ligand>
        <name>Mg(2+)</name>
        <dbReference type="ChEBI" id="CHEBI:18420"/>
        <label>2</label>
    </ligand>
</feature>
<feature type="binding site" evidence="1">
    <location>
        <position position="298"/>
    </location>
    <ligand>
        <name>Mn(2+)</name>
        <dbReference type="ChEBI" id="CHEBI:29035"/>
        <label>1</label>
    </ligand>
</feature>
<feature type="binding site" evidence="1">
    <location>
        <position position="298"/>
    </location>
    <ligand>
        <name>Mn(2+)</name>
        <dbReference type="ChEBI" id="CHEBI:29035"/>
        <label>2</label>
    </ligand>
</feature>
<feature type="binding site" evidence="1">
    <location>
        <position position="300"/>
    </location>
    <ligand>
        <name>Mg(2+)</name>
        <dbReference type="ChEBI" id="CHEBI:18420"/>
        <label>2</label>
    </ligand>
</feature>
<feature type="binding site" evidence="1">
    <location>
        <position position="300"/>
    </location>
    <ligand>
        <name>Mn(2+)</name>
        <dbReference type="ChEBI" id="CHEBI:29035"/>
        <label>2</label>
    </ligand>
</feature>
<feature type="binding site" evidence="1">
    <location>
        <position position="707"/>
    </location>
    <ligand>
        <name>ATP</name>
        <dbReference type="ChEBI" id="CHEBI:30616"/>
        <label>2</label>
    </ligand>
</feature>
<feature type="binding site" evidence="1">
    <location>
        <position position="746"/>
    </location>
    <ligand>
        <name>ATP</name>
        <dbReference type="ChEBI" id="CHEBI:30616"/>
        <label>2</label>
    </ligand>
</feature>
<feature type="binding site" evidence="1">
    <location>
        <position position="748"/>
    </location>
    <ligand>
        <name>ATP</name>
        <dbReference type="ChEBI" id="CHEBI:30616"/>
        <label>2</label>
    </ligand>
</feature>
<feature type="binding site" evidence="1">
    <location>
        <position position="752"/>
    </location>
    <ligand>
        <name>ATP</name>
        <dbReference type="ChEBI" id="CHEBI:30616"/>
        <label>2</label>
    </ligand>
</feature>
<feature type="binding site" evidence="1">
    <location>
        <position position="777"/>
    </location>
    <ligand>
        <name>ATP</name>
        <dbReference type="ChEBI" id="CHEBI:30616"/>
        <label>2</label>
    </ligand>
</feature>
<feature type="binding site" evidence="1">
    <location>
        <position position="778"/>
    </location>
    <ligand>
        <name>ATP</name>
        <dbReference type="ChEBI" id="CHEBI:30616"/>
        <label>2</label>
    </ligand>
</feature>
<feature type="binding site" evidence="1">
    <location>
        <position position="779"/>
    </location>
    <ligand>
        <name>ATP</name>
        <dbReference type="ChEBI" id="CHEBI:30616"/>
        <label>2</label>
    </ligand>
</feature>
<feature type="binding site" evidence="1">
    <location>
        <position position="780"/>
    </location>
    <ligand>
        <name>ATP</name>
        <dbReference type="ChEBI" id="CHEBI:30616"/>
        <label>2</label>
    </ligand>
</feature>
<feature type="binding site" evidence="1">
    <location>
        <position position="820"/>
    </location>
    <ligand>
        <name>ATP</name>
        <dbReference type="ChEBI" id="CHEBI:30616"/>
        <label>2</label>
    </ligand>
</feature>
<feature type="binding site" evidence="1">
    <location>
        <position position="820"/>
    </location>
    <ligand>
        <name>Mg(2+)</name>
        <dbReference type="ChEBI" id="CHEBI:18420"/>
        <label>3</label>
    </ligand>
</feature>
<feature type="binding site" evidence="1">
    <location>
        <position position="820"/>
    </location>
    <ligand>
        <name>Mn(2+)</name>
        <dbReference type="ChEBI" id="CHEBI:29035"/>
        <label>3</label>
    </ligand>
</feature>
<feature type="binding site" evidence="1">
    <location>
        <position position="832"/>
    </location>
    <ligand>
        <name>ATP</name>
        <dbReference type="ChEBI" id="CHEBI:30616"/>
        <label>2</label>
    </ligand>
</feature>
<feature type="binding site" evidence="1">
    <location>
        <position position="832"/>
    </location>
    <ligand>
        <name>Mg(2+)</name>
        <dbReference type="ChEBI" id="CHEBI:18420"/>
        <label>3</label>
    </ligand>
</feature>
<feature type="binding site" evidence="1">
    <location>
        <position position="832"/>
    </location>
    <ligand>
        <name>Mg(2+)</name>
        <dbReference type="ChEBI" id="CHEBI:18420"/>
        <label>4</label>
    </ligand>
</feature>
<feature type="binding site" evidence="1">
    <location>
        <position position="832"/>
    </location>
    <ligand>
        <name>Mn(2+)</name>
        <dbReference type="ChEBI" id="CHEBI:29035"/>
        <label>3</label>
    </ligand>
</feature>
<feature type="binding site" evidence="1">
    <location>
        <position position="832"/>
    </location>
    <ligand>
        <name>Mn(2+)</name>
        <dbReference type="ChEBI" id="CHEBI:29035"/>
        <label>4</label>
    </ligand>
</feature>
<feature type="binding site" evidence="1">
    <location>
        <position position="834"/>
    </location>
    <ligand>
        <name>Mg(2+)</name>
        <dbReference type="ChEBI" id="CHEBI:18420"/>
        <label>4</label>
    </ligand>
</feature>
<feature type="binding site" evidence="1">
    <location>
        <position position="834"/>
    </location>
    <ligand>
        <name>Mn(2+)</name>
        <dbReference type="ChEBI" id="CHEBI:29035"/>
        <label>4</label>
    </ligand>
</feature>
<reference key="1">
    <citation type="journal article" date="2004" name="J. Infect. Dis.">
        <title>Progress toward characterization of the group A Streptococcus metagenome: complete genome sequence of a macrolide-resistant serotype M6 strain.</title>
        <authorList>
            <person name="Banks D.J."/>
            <person name="Porcella S.F."/>
            <person name="Barbian K.D."/>
            <person name="Beres S.B."/>
            <person name="Philips L.E."/>
            <person name="Voyich J.M."/>
            <person name="DeLeo F.R."/>
            <person name="Martin J.M."/>
            <person name="Somerville G.A."/>
            <person name="Musser J.M."/>
        </authorList>
    </citation>
    <scope>NUCLEOTIDE SEQUENCE [LARGE SCALE GENOMIC DNA]</scope>
    <source>
        <strain>ATCC BAA-946 / MGAS10394</strain>
    </source>
</reference>
<name>CARB_STRP6</name>
<accession>Q5XCR6</accession>
<sequence length="1058" mass="116534">MPKRKDIQKIMVIGSGPIIIGQAAEFDYAGTQACLALKEEGYKVILVNSNPATIMTDKEIADKVYIEPLTLEFVNRIIRKERPDAILPTLGGQTGLNMAMALSKAGILDDLEIELLGTKLSAIDQAEDRDLFKQLMQELDQPIPESTIVKTVDEAVTFARDIGYPVIVRPAFTLGGTGGGICSSEEELCEITENGLKLSPVTQCLIERSIAGFKEIEYEVMRDSADNALVVCNMENFDPVGIHTGDSIVFAPTQTLSDIENQMLRDASLKIIRALKIEGGCNVQLALDPYSFKYYVIEVNPRVSRSSALASKATGYPIAKLAAKIAVGLTLDEMINPITGTTYAMFEPALDYVVAKIPRFPFDKFEHGERQLGTQMKATGEVMAIGRNLEESLLKACRSLEIGVCHNEMTSLSNISDEELVTKVIKAQDDRLFYLSEAIRRGYSIEELESLTKIDLFFLDKLLHIVEIEQELQMHVDHLESLKKAKRYGFSDQKIAEIWQKDESDIRAMRHSHSLYPVYKMVDTCAAEFDAKTPYFYSTYELENESVQSNKESILVLGSGPIRIGQGVEFDYATVHSVKAIQKAGYEAIIMNSNPETVSTDFSVSDKLYFEPLTFEDVMNVIDLEQPKGVIVQFGGQTAINLAQSLSDAGVTILGTQVEDLDRAEDRDLFEKALKELGIPQPQGQTATNEEEALEAAKKIGFPVLVRPSYVLGGRAMEIVENKEDLREYIRTAVKASPEHPILVDSYIFGKECEVDAISDGKSVLIPGIMEHIERAGVHSGDSMAVYPPQQLSKQIQETIAEYTKRLAIGLNCIGMMNVQFVIKNEQVYVIEVNPRASRTVPFLSKVTGIPMAQIATKLILGQTLKDLGYEDGLYPQSQLVHIKAPVFSFTKLAQVDSLLGPEMKSTGEVMGSDTSLEKALYKAFEANNSHLSEFGQIVFTIADDSKAEALSLARRFKAIGYQIMATQGTAAYFAEQGLSACLVGKIGDAANDIPTLVRHGHVQAIVNTVGIKRTADKDGQMIRSSAIEQGVPLFTALDTAKAMLTVLESRCFNIEAI</sequence>
<protein>
    <recommendedName>
        <fullName evidence="1">Carbamoyl phosphate synthase large chain</fullName>
        <ecNumber evidence="1">6.3.4.16</ecNumber>
        <ecNumber evidence="1">6.3.5.5</ecNumber>
    </recommendedName>
    <alternativeName>
        <fullName evidence="1">Carbamoyl phosphate synthetase ammonia chain</fullName>
    </alternativeName>
</protein>